<feature type="chain" id="PRO_1000065254" description="UPF0294 protein YafD">
    <location>
        <begin position="1"/>
        <end position="266"/>
    </location>
</feature>
<comment type="subcellular location">
    <subcellularLocation>
        <location evidence="1">Cytoplasm</location>
    </subcellularLocation>
</comment>
<comment type="similarity">
    <text evidence="1">Belongs to the UPF0294 family.</text>
</comment>
<organism>
    <name type="scientific">Shigella boydii serotype 4 (strain Sb227)</name>
    <dbReference type="NCBI Taxonomy" id="300268"/>
    <lineage>
        <taxon>Bacteria</taxon>
        <taxon>Pseudomonadati</taxon>
        <taxon>Pseudomonadota</taxon>
        <taxon>Gammaproteobacteria</taxon>
        <taxon>Enterobacterales</taxon>
        <taxon>Enterobacteriaceae</taxon>
        <taxon>Shigella</taxon>
    </lineage>
</organism>
<dbReference type="EMBL" id="CP000036">
    <property type="protein sequence ID" value="ABB64921.1"/>
    <property type="molecule type" value="Genomic_DNA"/>
</dbReference>
<dbReference type="RefSeq" id="WP_001230983.1">
    <property type="nucleotide sequence ID" value="NC_007613.1"/>
</dbReference>
<dbReference type="SMR" id="Q325T7"/>
<dbReference type="KEGG" id="sbo:SBO_0198"/>
<dbReference type="HOGENOM" id="CLU_083563_0_0_6"/>
<dbReference type="Proteomes" id="UP000007067">
    <property type="component" value="Chromosome"/>
</dbReference>
<dbReference type="GO" id="GO:0005737">
    <property type="term" value="C:cytoplasm"/>
    <property type="evidence" value="ECO:0007669"/>
    <property type="project" value="UniProtKB-SubCell"/>
</dbReference>
<dbReference type="GO" id="GO:0003824">
    <property type="term" value="F:catalytic activity"/>
    <property type="evidence" value="ECO:0007669"/>
    <property type="project" value="InterPro"/>
</dbReference>
<dbReference type="Gene3D" id="3.60.10.10">
    <property type="entry name" value="Endonuclease/exonuclease/phosphatase"/>
    <property type="match status" value="1"/>
</dbReference>
<dbReference type="HAMAP" id="MF_01119">
    <property type="entry name" value="UPF0294"/>
    <property type="match status" value="1"/>
</dbReference>
<dbReference type="InterPro" id="IPR036691">
    <property type="entry name" value="Endo/exonu/phosph_ase_sf"/>
</dbReference>
<dbReference type="InterPro" id="IPR005135">
    <property type="entry name" value="Endo/exonuclease/phosphatase"/>
</dbReference>
<dbReference type="InterPro" id="IPR022958">
    <property type="entry name" value="UPF0294"/>
</dbReference>
<dbReference type="NCBIfam" id="NF003839">
    <property type="entry name" value="PRK05421.1-1"/>
    <property type="match status" value="1"/>
</dbReference>
<dbReference type="NCBIfam" id="NF003840">
    <property type="entry name" value="PRK05421.1-2"/>
    <property type="match status" value="1"/>
</dbReference>
<dbReference type="NCBIfam" id="NF003841">
    <property type="entry name" value="PRK05421.1-3"/>
    <property type="match status" value="1"/>
</dbReference>
<dbReference type="NCBIfam" id="NF003842">
    <property type="entry name" value="PRK05421.1-4"/>
    <property type="match status" value="1"/>
</dbReference>
<dbReference type="Pfam" id="PF03372">
    <property type="entry name" value="Exo_endo_phos"/>
    <property type="match status" value="1"/>
</dbReference>
<dbReference type="SUPFAM" id="SSF56219">
    <property type="entry name" value="DNase I-like"/>
    <property type="match status" value="1"/>
</dbReference>
<reference key="1">
    <citation type="journal article" date="2005" name="Nucleic Acids Res.">
        <title>Genome dynamics and diversity of Shigella species, the etiologic agents of bacillary dysentery.</title>
        <authorList>
            <person name="Yang F."/>
            <person name="Yang J."/>
            <person name="Zhang X."/>
            <person name="Chen L."/>
            <person name="Jiang Y."/>
            <person name="Yan Y."/>
            <person name="Tang X."/>
            <person name="Wang J."/>
            <person name="Xiong Z."/>
            <person name="Dong J."/>
            <person name="Xue Y."/>
            <person name="Zhu Y."/>
            <person name="Xu X."/>
            <person name="Sun L."/>
            <person name="Chen S."/>
            <person name="Nie H."/>
            <person name="Peng J."/>
            <person name="Xu J."/>
            <person name="Wang Y."/>
            <person name="Yuan Z."/>
            <person name="Wen Y."/>
            <person name="Yao Z."/>
            <person name="Shen Y."/>
            <person name="Qiang B."/>
            <person name="Hou Y."/>
            <person name="Yu J."/>
            <person name="Jin Q."/>
        </authorList>
    </citation>
    <scope>NUCLEOTIDE SEQUENCE [LARGE SCALE GENOMIC DNA]</scope>
    <source>
        <strain>Sb227</strain>
    </source>
</reference>
<sequence length="266" mass="29992">MRKNTYAMRYVAGQPAERILPPGSFASIGQALPPGEPLSTEERIRILVWNIYKQQRAEWLSVLKNYGKDAHLVLLQEAQTTPELVQFATANYLAADQVPAFVLPQHPSGVMTLSAAHPVYCCPLREREPILRLAKSALVTVYPLPDTRLLMVVNIHAVNFSLGVDVYSKQLLPIGDQIAHHSGPVIMAGDFNAWSRRRMNALYRFAREMSLRQVRFTDDQRRRAFGRPLDFVFYRGLNVSEASVLVTRASDHNPLLVEFSPGKPDK</sequence>
<accession>Q325T7</accession>
<keyword id="KW-0963">Cytoplasm</keyword>
<proteinExistence type="inferred from homology"/>
<name>YAFD_SHIBS</name>
<evidence type="ECO:0000255" key="1">
    <source>
        <dbReference type="HAMAP-Rule" id="MF_01119"/>
    </source>
</evidence>
<gene>
    <name evidence="1" type="primary">yafD</name>
    <name type="ordered locus">SBO_0198</name>
</gene>
<protein>
    <recommendedName>
        <fullName evidence="1">UPF0294 protein YafD</fullName>
    </recommendedName>
</protein>